<proteinExistence type="inferred from homology"/>
<name>HIS1_PHOPR</name>
<evidence type="ECO:0000250" key="1"/>
<evidence type="ECO:0000305" key="2"/>
<keyword id="KW-0028">Amino-acid biosynthesis</keyword>
<keyword id="KW-0067">ATP-binding</keyword>
<keyword id="KW-0963">Cytoplasm</keyword>
<keyword id="KW-0328">Glycosyltransferase</keyword>
<keyword id="KW-0368">Histidine biosynthesis</keyword>
<keyword id="KW-0460">Magnesium</keyword>
<keyword id="KW-0479">Metal-binding</keyword>
<keyword id="KW-0547">Nucleotide-binding</keyword>
<keyword id="KW-1185">Reference proteome</keyword>
<keyword id="KW-0808">Transferase</keyword>
<protein>
    <recommendedName>
        <fullName>ATP phosphoribosyltransferase</fullName>
        <shortName>ATP-PRT</shortName>
        <shortName>ATP-PRTase</shortName>
        <ecNumber>2.4.2.17</ecNumber>
    </recommendedName>
</protein>
<gene>
    <name type="primary">hisG</name>
    <name type="ordered locus">PBPRA1092</name>
</gene>
<reference key="1">
    <citation type="journal article" date="2005" name="Science">
        <title>Life at depth: Photobacterium profundum genome sequence and expression analysis.</title>
        <authorList>
            <person name="Vezzi A."/>
            <person name="Campanaro S."/>
            <person name="D'Angelo M."/>
            <person name="Simonato F."/>
            <person name="Vitulo N."/>
            <person name="Lauro F.M."/>
            <person name="Cestaro A."/>
            <person name="Malacrida G."/>
            <person name="Simionati B."/>
            <person name="Cannata N."/>
            <person name="Romualdi C."/>
            <person name="Bartlett D.H."/>
            <person name="Valle G."/>
        </authorList>
    </citation>
    <scope>NUCLEOTIDE SEQUENCE [LARGE SCALE GENOMIC DNA]</scope>
    <source>
        <strain>ATCC BAA-1253 / SS9</strain>
    </source>
</reference>
<accession>P62365</accession>
<organism>
    <name type="scientific">Photobacterium profundum (strain SS9)</name>
    <dbReference type="NCBI Taxonomy" id="298386"/>
    <lineage>
        <taxon>Bacteria</taxon>
        <taxon>Pseudomonadati</taxon>
        <taxon>Pseudomonadota</taxon>
        <taxon>Gammaproteobacteria</taxon>
        <taxon>Vibrionales</taxon>
        <taxon>Vibrionaceae</taxon>
        <taxon>Photobacterium</taxon>
    </lineage>
</organism>
<comment type="function">
    <text evidence="1">Catalyzes the condensation of ATP and 5-phosphoribose 1-diphosphate to form N'-(5'-phosphoribosyl)-ATP (PR-ATP). Has a crucial role in the pathway because the rate of histidine biosynthesis seems to be controlled primarily by regulation of HisG enzymatic activity (By similarity).</text>
</comment>
<comment type="catalytic activity">
    <reaction>
        <text>1-(5-phospho-beta-D-ribosyl)-ATP + diphosphate = 5-phospho-alpha-D-ribose 1-diphosphate + ATP</text>
        <dbReference type="Rhea" id="RHEA:18473"/>
        <dbReference type="ChEBI" id="CHEBI:30616"/>
        <dbReference type="ChEBI" id="CHEBI:33019"/>
        <dbReference type="ChEBI" id="CHEBI:58017"/>
        <dbReference type="ChEBI" id="CHEBI:73183"/>
        <dbReference type="EC" id="2.4.2.17"/>
    </reaction>
</comment>
<comment type="cofactor">
    <cofactor evidence="1">
        <name>Mg(2+)</name>
        <dbReference type="ChEBI" id="CHEBI:18420"/>
    </cofactor>
</comment>
<comment type="activity regulation">
    <text evidence="1">Feedback inhibited by histidine.</text>
</comment>
<comment type="pathway">
    <text>Amino-acid biosynthesis; L-histidine biosynthesis; L-histidine from 5-phospho-alpha-D-ribose 1-diphosphate: step 1/9.</text>
</comment>
<comment type="subcellular location">
    <subcellularLocation>
        <location evidence="1">Cytoplasm</location>
    </subcellularLocation>
</comment>
<comment type="similarity">
    <text evidence="2">Belongs to the ATP phosphoribosyltransferase family. Long subfamily.</text>
</comment>
<feature type="chain" id="PRO_0000151860" description="ATP phosphoribosyltransferase">
    <location>
        <begin position="1"/>
        <end position="298"/>
    </location>
</feature>
<dbReference type="EC" id="2.4.2.17"/>
<dbReference type="EMBL" id="CR378666">
    <property type="protein sequence ID" value="CAG19503.1"/>
    <property type="molecule type" value="Genomic_DNA"/>
</dbReference>
<dbReference type="RefSeq" id="WP_011217836.1">
    <property type="nucleotide sequence ID" value="NC_006370.1"/>
</dbReference>
<dbReference type="SMR" id="P62365"/>
<dbReference type="STRING" id="298386.PBPRA1092"/>
<dbReference type="KEGG" id="ppr:PBPRA1092"/>
<dbReference type="eggNOG" id="COG0040">
    <property type="taxonomic scope" value="Bacteria"/>
</dbReference>
<dbReference type="HOGENOM" id="CLU_038115_1_0_6"/>
<dbReference type="UniPathway" id="UPA00031">
    <property type="reaction ID" value="UER00006"/>
</dbReference>
<dbReference type="Proteomes" id="UP000000593">
    <property type="component" value="Chromosome 1"/>
</dbReference>
<dbReference type="GO" id="GO:0005737">
    <property type="term" value="C:cytoplasm"/>
    <property type="evidence" value="ECO:0007669"/>
    <property type="project" value="UniProtKB-SubCell"/>
</dbReference>
<dbReference type="GO" id="GO:0005524">
    <property type="term" value="F:ATP binding"/>
    <property type="evidence" value="ECO:0007669"/>
    <property type="project" value="UniProtKB-KW"/>
</dbReference>
<dbReference type="GO" id="GO:0003879">
    <property type="term" value="F:ATP phosphoribosyltransferase activity"/>
    <property type="evidence" value="ECO:0007669"/>
    <property type="project" value="UniProtKB-UniRule"/>
</dbReference>
<dbReference type="GO" id="GO:0000287">
    <property type="term" value="F:magnesium ion binding"/>
    <property type="evidence" value="ECO:0007669"/>
    <property type="project" value="UniProtKB-UniRule"/>
</dbReference>
<dbReference type="GO" id="GO:0000105">
    <property type="term" value="P:L-histidine biosynthetic process"/>
    <property type="evidence" value="ECO:0007669"/>
    <property type="project" value="UniProtKB-UniRule"/>
</dbReference>
<dbReference type="CDD" id="cd13592">
    <property type="entry name" value="PBP2_HisGL2"/>
    <property type="match status" value="1"/>
</dbReference>
<dbReference type="FunFam" id="3.30.70.120:FF:000002">
    <property type="entry name" value="ATP phosphoribosyltransferase"/>
    <property type="match status" value="1"/>
</dbReference>
<dbReference type="FunFam" id="3.40.190.10:FF:000008">
    <property type="entry name" value="ATP phosphoribosyltransferase"/>
    <property type="match status" value="1"/>
</dbReference>
<dbReference type="Gene3D" id="3.30.70.120">
    <property type="match status" value="1"/>
</dbReference>
<dbReference type="Gene3D" id="3.40.190.10">
    <property type="entry name" value="Periplasmic binding protein-like II"/>
    <property type="match status" value="2"/>
</dbReference>
<dbReference type="HAMAP" id="MF_00079">
    <property type="entry name" value="HisG_Long"/>
    <property type="match status" value="1"/>
</dbReference>
<dbReference type="InterPro" id="IPR020621">
    <property type="entry name" value="ATP-PRT_HisG_long"/>
</dbReference>
<dbReference type="InterPro" id="IPR013820">
    <property type="entry name" value="ATP_PRibTrfase_cat"/>
</dbReference>
<dbReference type="InterPro" id="IPR018198">
    <property type="entry name" value="ATP_PRibTrfase_CS"/>
</dbReference>
<dbReference type="InterPro" id="IPR001348">
    <property type="entry name" value="ATP_PRibTrfase_HisG"/>
</dbReference>
<dbReference type="InterPro" id="IPR013115">
    <property type="entry name" value="HisG_C"/>
</dbReference>
<dbReference type="InterPro" id="IPR011322">
    <property type="entry name" value="N-reg_PII-like_a/b"/>
</dbReference>
<dbReference type="InterPro" id="IPR015867">
    <property type="entry name" value="N-reg_PII/ATP_PRibTrfase_C"/>
</dbReference>
<dbReference type="NCBIfam" id="TIGR00070">
    <property type="entry name" value="hisG"/>
    <property type="match status" value="1"/>
</dbReference>
<dbReference type="NCBIfam" id="TIGR03455">
    <property type="entry name" value="HisG_C-term"/>
    <property type="match status" value="1"/>
</dbReference>
<dbReference type="PANTHER" id="PTHR21403:SF8">
    <property type="entry name" value="ATP PHOSPHORIBOSYLTRANSFERASE"/>
    <property type="match status" value="1"/>
</dbReference>
<dbReference type="PANTHER" id="PTHR21403">
    <property type="entry name" value="ATP PHOSPHORIBOSYLTRANSFERASE ATP-PRTASE"/>
    <property type="match status" value="1"/>
</dbReference>
<dbReference type="Pfam" id="PF01634">
    <property type="entry name" value="HisG"/>
    <property type="match status" value="1"/>
</dbReference>
<dbReference type="Pfam" id="PF08029">
    <property type="entry name" value="HisG_C"/>
    <property type="match status" value="1"/>
</dbReference>
<dbReference type="SUPFAM" id="SSF54913">
    <property type="entry name" value="GlnB-like"/>
    <property type="match status" value="1"/>
</dbReference>
<dbReference type="SUPFAM" id="SSF53850">
    <property type="entry name" value="Periplasmic binding protein-like II"/>
    <property type="match status" value="1"/>
</dbReference>
<dbReference type="PROSITE" id="PS01316">
    <property type="entry name" value="ATP_P_PHORIBOSYLTR"/>
    <property type="match status" value="1"/>
</dbReference>
<sequence>MQTQRLRIAIQKKGRLSKECQDLLKRCGVKFNMMGERLVVHSENMPIDLLLVRDDDIPGLIMDGVVDLGVIGENELEEVGLERAARNEPSDYKKLRRLDFGDCRLSIAIDKDATYNGPQDLQGKRIATTYPQLVKRYMDKQGVTFSTCMLNGSVEVAPRAGLADAICDLVSTGATLEANGLKEAAVILRSKAVLIQCTAELSAEKQALIDRLLTRMQGVIQAKESKYIMLHAPTDRLEQIKMLLPGAEDPTVLPLSQNNNRVAVHLVSTENLFWETMEQLKELGASSILVLPIEKMME</sequence>